<feature type="chain" id="PRO_1000200226" description="UPF0145 protein CCNA_02462">
    <location>
        <begin position="1"/>
        <end position="105"/>
    </location>
</feature>
<keyword id="KW-1185">Reference proteome</keyword>
<dbReference type="EMBL" id="CP001340">
    <property type="protein sequence ID" value="ACL95927.1"/>
    <property type="molecule type" value="Genomic_DNA"/>
</dbReference>
<dbReference type="RefSeq" id="WP_010920235.1">
    <property type="nucleotide sequence ID" value="NC_011916.1"/>
</dbReference>
<dbReference type="RefSeq" id="YP_002517835.1">
    <property type="nucleotide sequence ID" value="NC_011916.1"/>
</dbReference>
<dbReference type="SMR" id="B8GZD8"/>
<dbReference type="GeneID" id="7331697"/>
<dbReference type="KEGG" id="ccs:CCNA_02462"/>
<dbReference type="PATRIC" id="fig|565050.3.peg.2416"/>
<dbReference type="HOGENOM" id="CLU_117144_3_2_5"/>
<dbReference type="OrthoDB" id="9796448at2"/>
<dbReference type="PhylomeDB" id="B8GZD8"/>
<dbReference type="Proteomes" id="UP000001364">
    <property type="component" value="Chromosome"/>
</dbReference>
<dbReference type="Gene3D" id="3.30.110.70">
    <property type="entry name" value="Hypothetical protein apc22750. Chain B"/>
    <property type="match status" value="1"/>
</dbReference>
<dbReference type="HAMAP" id="MF_00338">
    <property type="entry name" value="UPF0145"/>
    <property type="match status" value="1"/>
</dbReference>
<dbReference type="InterPro" id="IPR035439">
    <property type="entry name" value="UPF0145_dom_sf"/>
</dbReference>
<dbReference type="InterPro" id="IPR002765">
    <property type="entry name" value="UPF0145_YbjQ-like"/>
</dbReference>
<dbReference type="PANTHER" id="PTHR34068">
    <property type="entry name" value="UPF0145 PROTEIN YBJQ"/>
    <property type="match status" value="1"/>
</dbReference>
<dbReference type="PANTHER" id="PTHR34068:SF1">
    <property type="entry name" value="UPF0145 PROTEIN YBJQ"/>
    <property type="match status" value="1"/>
</dbReference>
<dbReference type="Pfam" id="PF01906">
    <property type="entry name" value="YbjQ_1"/>
    <property type="match status" value="1"/>
</dbReference>
<dbReference type="SUPFAM" id="SSF117782">
    <property type="entry name" value="YbjQ-like"/>
    <property type="match status" value="1"/>
</dbReference>
<proteinExistence type="inferred from homology"/>
<sequence length="105" mass="11269">MLITTTPFIEGRPVQEYKGAIYAQSILGANVVLDLLAAIRDFIGGHSKSYERVLARAREDAMKNLIKEAEKLGANAILAVDLDYNTVGPQGSMMMVSVSGTAVVL</sequence>
<evidence type="ECO:0000255" key="1">
    <source>
        <dbReference type="HAMAP-Rule" id="MF_00338"/>
    </source>
</evidence>
<gene>
    <name type="ordered locus">CCNA_02462</name>
</gene>
<reference key="1">
    <citation type="journal article" date="2010" name="J. Bacteriol.">
        <title>The genetic basis of laboratory adaptation in Caulobacter crescentus.</title>
        <authorList>
            <person name="Marks M.E."/>
            <person name="Castro-Rojas C.M."/>
            <person name="Teiling C."/>
            <person name="Du L."/>
            <person name="Kapatral V."/>
            <person name="Walunas T.L."/>
            <person name="Crosson S."/>
        </authorList>
    </citation>
    <scope>NUCLEOTIDE SEQUENCE [LARGE SCALE GENOMIC DNA]</scope>
    <source>
        <strain>NA1000 / CB15N</strain>
    </source>
</reference>
<comment type="similarity">
    <text evidence="1">Belongs to the UPF0145 family.</text>
</comment>
<accession>B8GZD8</accession>
<protein>
    <recommendedName>
        <fullName evidence="1">UPF0145 protein CCNA_02462</fullName>
    </recommendedName>
</protein>
<organism>
    <name type="scientific">Caulobacter vibrioides (strain NA1000 / CB15N)</name>
    <name type="common">Caulobacter crescentus</name>
    <dbReference type="NCBI Taxonomy" id="565050"/>
    <lineage>
        <taxon>Bacteria</taxon>
        <taxon>Pseudomonadati</taxon>
        <taxon>Pseudomonadota</taxon>
        <taxon>Alphaproteobacteria</taxon>
        <taxon>Caulobacterales</taxon>
        <taxon>Caulobacteraceae</taxon>
        <taxon>Caulobacter</taxon>
    </lineage>
</organism>
<name>Y2462_CAUVN</name>